<protein>
    <recommendedName>
        <fullName evidence="1">Ribosomal RNA small subunit methyltransferase J</fullName>
        <ecNumber evidence="1">2.1.1.242</ecNumber>
    </recommendedName>
    <alternativeName>
        <fullName evidence="1">16S rRNA m2G1516 methyltransferase</fullName>
    </alternativeName>
    <alternativeName>
        <fullName evidence="1">rRNA (guanine-N(2)-)-methyltransferase</fullName>
    </alternativeName>
</protein>
<name>RSMJ_ALTMD</name>
<comment type="function">
    <text evidence="1">Specifically methylates the guanosine in position 1516 of 16S rRNA.</text>
</comment>
<comment type="catalytic activity">
    <reaction evidence="1">
        <text>guanosine(1516) in 16S rRNA + S-adenosyl-L-methionine = N(2)-methylguanosine(1516) in 16S rRNA + S-adenosyl-L-homocysteine + H(+)</text>
        <dbReference type="Rhea" id="RHEA:43220"/>
        <dbReference type="Rhea" id="RHEA-COMP:10412"/>
        <dbReference type="Rhea" id="RHEA-COMP:10413"/>
        <dbReference type="ChEBI" id="CHEBI:15378"/>
        <dbReference type="ChEBI" id="CHEBI:57856"/>
        <dbReference type="ChEBI" id="CHEBI:59789"/>
        <dbReference type="ChEBI" id="CHEBI:74269"/>
        <dbReference type="ChEBI" id="CHEBI:74481"/>
        <dbReference type="EC" id="2.1.1.242"/>
    </reaction>
</comment>
<comment type="subcellular location">
    <subcellularLocation>
        <location evidence="1">Cytoplasm</location>
    </subcellularLocation>
</comment>
<comment type="similarity">
    <text evidence="1">Belongs to the methyltransferase superfamily. RsmJ family.</text>
</comment>
<organism>
    <name type="scientific">Alteromonas mediterranea (strain DSM 17117 / CIP 110805 / LMG 28347 / Deep ecotype)</name>
    <dbReference type="NCBI Taxonomy" id="1774373"/>
    <lineage>
        <taxon>Bacteria</taxon>
        <taxon>Pseudomonadati</taxon>
        <taxon>Pseudomonadota</taxon>
        <taxon>Gammaproteobacteria</taxon>
        <taxon>Alteromonadales</taxon>
        <taxon>Alteromonadaceae</taxon>
        <taxon>Alteromonas/Salinimonas group</taxon>
        <taxon>Alteromonas</taxon>
    </lineage>
</organism>
<sequence>MLNSVPLVIAQHSTQDDTSLLNSIGNKWGFPVVSHSEKPAEGFYLQIQNGVLGLADASEKKVLPVEVDFASPASLYRKQHGGGRKEPIVKAIGLKGNEGWHVVDATPGLGRDAFVLVSVGCKVTMIERSPIVAALLEDGIRRLALSFPELAAKMSLQHGNSAEVMQYFTGENVNAIYLDPMFPHKKKSALVKKEMRLFQQLLGHDPDADALLPPALKLATHRVVVKRPNSADVLAGEKPSMAIESKKHRFDVYLCQKP</sequence>
<keyword id="KW-0963">Cytoplasm</keyword>
<keyword id="KW-0489">Methyltransferase</keyword>
<keyword id="KW-0698">rRNA processing</keyword>
<keyword id="KW-0949">S-adenosyl-L-methionine</keyword>
<keyword id="KW-0808">Transferase</keyword>
<proteinExistence type="inferred from homology"/>
<dbReference type="EC" id="2.1.1.242" evidence="1"/>
<dbReference type="EMBL" id="CP001103">
    <property type="protein sequence ID" value="AEA96307.1"/>
    <property type="molecule type" value="Genomic_DNA"/>
</dbReference>
<dbReference type="RefSeq" id="WP_012516681.1">
    <property type="nucleotide sequence ID" value="NC_011138.3"/>
</dbReference>
<dbReference type="SMR" id="B4S2X7"/>
<dbReference type="GeneID" id="56340769"/>
<dbReference type="KEGG" id="amc:MADE_1000790"/>
<dbReference type="PATRIC" id="fig|314275.5.peg.163"/>
<dbReference type="HOGENOM" id="CLU_076324_0_1_6"/>
<dbReference type="Proteomes" id="UP000001870">
    <property type="component" value="Chromosome"/>
</dbReference>
<dbReference type="GO" id="GO:0005737">
    <property type="term" value="C:cytoplasm"/>
    <property type="evidence" value="ECO:0007669"/>
    <property type="project" value="UniProtKB-SubCell"/>
</dbReference>
<dbReference type="GO" id="GO:0008990">
    <property type="term" value="F:rRNA (guanine-N2-)-methyltransferase activity"/>
    <property type="evidence" value="ECO:0007669"/>
    <property type="project" value="UniProtKB-UniRule"/>
</dbReference>
<dbReference type="CDD" id="cd02440">
    <property type="entry name" value="AdoMet_MTases"/>
    <property type="match status" value="1"/>
</dbReference>
<dbReference type="Gene3D" id="3.40.50.150">
    <property type="entry name" value="Vaccinia Virus protein VP39"/>
    <property type="match status" value="1"/>
</dbReference>
<dbReference type="HAMAP" id="MF_01523">
    <property type="entry name" value="16SrRNA_methyltr_J"/>
    <property type="match status" value="1"/>
</dbReference>
<dbReference type="InterPro" id="IPR007536">
    <property type="entry name" value="16SrRNA_methylTrfase_J"/>
</dbReference>
<dbReference type="InterPro" id="IPR029063">
    <property type="entry name" value="SAM-dependent_MTases_sf"/>
</dbReference>
<dbReference type="PANTHER" id="PTHR36112">
    <property type="entry name" value="RIBOSOMAL RNA SMALL SUBUNIT METHYLTRANSFERASE J"/>
    <property type="match status" value="1"/>
</dbReference>
<dbReference type="PANTHER" id="PTHR36112:SF1">
    <property type="entry name" value="RIBOSOMAL RNA SMALL SUBUNIT METHYLTRANSFERASE J"/>
    <property type="match status" value="1"/>
</dbReference>
<dbReference type="Pfam" id="PF04445">
    <property type="entry name" value="SAM_MT"/>
    <property type="match status" value="1"/>
</dbReference>
<dbReference type="SUPFAM" id="SSF53335">
    <property type="entry name" value="S-adenosyl-L-methionine-dependent methyltransferases"/>
    <property type="match status" value="1"/>
</dbReference>
<gene>
    <name evidence="1" type="primary">rsmJ</name>
    <name type="ordered locus">MADE_1000790</name>
</gene>
<feature type="chain" id="PRO_0000383373" description="Ribosomal RNA small subunit methyltransferase J">
    <location>
        <begin position="1"/>
        <end position="258"/>
    </location>
</feature>
<feature type="binding site" evidence="1">
    <location>
        <begin position="111"/>
        <end position="112"/>
    </location>
    <ligand>
        <name>S-adenosyl-L-methionine</name>
        <dbReference type="ChEBI" id="CHEBI:59789"/>
    </ligand>
</feature>
<feature type="binding site" evidence="1">
    <location>
        <begin position="127"/>
        <end position="128"/>
    </location>
    <ligand>
        <name>S-adenosyl-L-methionine</name>
        <dbReference type="ChEBI" id="CHEBI:59789"/>
    </ligand>
</feature>
<feature type="binding site" evidence="1">
    <location>
        <position position="179"/>
    </location>
    <ligand>
        <name>S-adenosyl-L-methionine</name>
        <dbReference type="ChEBI" id="CHEBI:59789"/>
    </ligand>
</feature>
<accession>B4S2X7</accession>
<accession>F2G2U7</accession>
<evidence type="ECO:0000255" key="1">
    <source>
        <dbReference type="HAMAP-Rule" id="MF_01523"/>
    </source>
</evidence>
<reference key="1">
    <citation type="journal article" date="2008" name="ISME J.">
        <title>Comparative genomics of two ecotypes of the marine planktonic copiotroph Alteromonas macleodii suggests alternative lifestyles associated with different kinds of particulate organic matter.</title>
        <authorList>
            <person name="Ivars-Martinez E."/>
            <person name="Martin-Cuadrado A.-B."/>
            <person name="D'Auria G."/>
            <person name="Mira A."/>
            <person name="Ferriera S."/>
            <person name="Johnson J."/>
            <person name="Friedman R."/>
            <person name="Rodriguez-Valera F."/>
        </authorList>
    </citation>
    <scope>NUCLEOTIDE SEQUENCE [LARGE SCALE GENOMIC DNA]</scope>
    <source>
        <strain>DSM 17117 / CIP 110805 / LMG 28347 / Deep ecotype</strain>
    </source>
</reference>